<accession>Q9ZBU1</accession>
<gene>
    <name type="primary">xyoA</name>
    <name evidence="4" type="synonym">aldo</name>
    <name type="ordered locus">SCO6147</name>
    <name type="ORF">SC1A9.11c</name>
</gene>
<name>XYOA_STRCO</name>
<protein>
    <recommendedName>
        <fullName evidence="4 5">Alditol oxidase</fullName>
        <shortName evidence="4 5">AldO</shortName>
        <ecNumber evidence="2">1.1.3.41</ecNumber>
    </recommendedName>
    <alternativeName>
        <fullName evidence="7">Xylitol oxidase</fullName>
    </alternativeName>
</protein>
<keyword id="KW-0002">3D-structure</keyword>
<keyword id="KW-0274">FAD</keyword>
<keyword id="KW-0285">Flavoprotein</keyword>
<keyword id="KW-0560">Oxidoreductase</keyword>
<keyword id="KW-1185">Reference proteome</keyword>
<reference key="1">
    <citation type="journal article" date="2002" name="Nature">
        <title>Complete genome sequence of the model actinomycete Streptomyces coelicolor A3(2).</title>
        <authorList>
            <person name="Bentley S.D."/>
            <person name="Chater K.F."/>
            <person name="Cerdeno-Tarraga A.-M."/>
            <person name="Challis G.L."/>
            <person name="Thomson N.R."/>
            <person name="James K.D."/>
            <person name="Harris D.E."/>
            <person name="Quail M.A."/>
            <person name="Kieser H."/>
            <person name="Harper D."/>
            <person name="Bateman A."/>
            <person name="Brown S."/>
            <person name="Chandra G."/>
            <person name="Chen C.W."/>
            <person name="Collins M."/>
            <person name="Cronin A."/>
            <person name="Fraser A."/>
            <person name="Goble A."/>
            <person name="Hidalgo J."/>
            <person name="Hornsby T."/>
            <person name="Howarth S."/>
            <person name="Huang C.-H."/>
            <person name="Kieser T."/>
            <person name="Larke L."/>
            <person name="Murphy L.D."/>
            <person name="Oliver K."/>
            <person name="O'Neil S."/>
            <person name="Rabbinowitsch E."/>
            <person name="Rajandream M.A."/>
            <person name="Rutherford K.M."/>
            <person name="Rutter S."/>
            <person name="Seeger K."/>
            <person name="Saunders D."/>
            <person name="Sharp S."/>
            <person name="Squares R."/>
            <person name="Squares S."/>
            <person name="Taylor K."/>
            <person name="Warren T."/>
            <person name="Wietzorrek A."/>
            <person name="Woodward J.R."/>
            <person name="Barrell B.G."/>
            <person name="Parkhill J."/>
            <person name="Hopwood D.A."/>
        </authorList>
    </citation>
    <scope>NUCLEOTIDE SEQUENCE [LARGE SCALE GENOMIC DNA]</scope>
    <source>
        <strain>ATCC BAA-471 / A3(2) / M145</strain>
    </source>
</reference>
<reference key="2">
    <citation type="journal article" date="2007" name="J. Biol. Chem.">
        <title>Discovery, characterization, and kinetic analysis of an alditol oxidase from Streptomyces coelicolor.</title>
        <authorList>
            <person name="Heuts D.P."/>
            <person name="van Hellemond E.W."/>
            <person name="Janssen D.B."/>
            <person name="Fraaije M.W."/>
        </authorList>
    </citation>
    <scope>FUNCTION</scope>
    <scope>CATALYTIC ACTIVITY</scope>
    <scope>SUBSTRATE SPECIFICITY</scope>
    <scope>COFACTOR</scope>
    <scope>BIOPHYSICOCHEMICAL PROPERTIES</scope>
    <scope>SUBUNIT</scope>
    <scope>MUTAGENESIS OF HIS-46</scope>
    <source>
        <strain>ATCC BAA-471 / A3(2) / M145</strain>
    </source>
</reference>
<reference evidence="8 9 10 11 12" key="3">
    <citation type="journal article" date="2008" name="Biochemistry">
        <title>Structural analysis of the catalytic mechanism and stereoselectivity in Streptomyces coelicolor alditol oxidase.</title>
        <authorList>
            <person name="Forneris F."/>
            <person name="Heuts D.P."/>
            <person name="Delvecchio M."/>
            <person name="Rovida S."/>
            <person name="Fraaije M.W."/>
            <person name="Mattevi A."/>
        </authorList>
    </citation>
    <scope>X-RAY CRYSTALLOGRAPHY (1.10 ANGSTROMS) IN COMPLEXES WITH D-SORBITOL; D-MANNITOL; XYLITOL AND FAD</scope>
    <source>
        <strain>ATCC BAA-471 / A3(2) / M145</strain>
    </source>
</reference>
<organism>
    <name type="scientific">Streptomyces coelicolor (strain ATCC BAA-471 / A3(2) / M145)</name>
    <dbReference type="NCBI Taxonomy" id="100226"/>
    <lineage>
        <taxon>Bacteria</taxon>
        <taxon>Bacillati</taxon>
        <taxon>Actinomycetota</taxon>
        <taxon>Actinomycetes</taxon>
        <taxon>Kitasatosporales</taxon>
        <taxon>Streptomycetaceae</taxon>
        <taxon>Streptomyces</taxon>
        <taxon>Streptomyces albidoflavus group</taxon>
    </lineage>
</organism>
<comment type="function">
    <text evidence="2">Oxidase that performs selective oxidation of the terminal primary hydroxyl group of several alditols, with a reduction of O2 to H2O2. Shows highest activity on xylitol and D-sorbitol, and a poor efficiency with D-mannitol and L-threitol.</text>
</comment>
<comment type="catalytic activity">
    <reaction evidence="2">
        <text>an alditol + O2 = an aldose + H2O2</text>
        <dbReference type="Rhea" id="RHEA:25908"/>
        <dbReference type="Rhea" id="RHEA-COMP:9554"/>
        <dbReference type="Rhea" id="RHEA-COMP:9555"/>
        <dbReference type="ChEBI" id="CHEBI:15379"/>
        <dbReference type="ChEBI" id="CHEBI:15693"/>
        <dbReference type="ChEBI" id="CHEBI:16240"/>
        <dbReference type="ChEBI" id="CHEBI:17522"/>
        <dbReference type="EC" id="1.1.3.41"/>
    </reaction>
</comment>
<comment type="catalytic activity">
    <reaction evidence="2">
        <text>xylitol + O2 = D-xylose + H2O2</text>
        <dbReference type="Rhea" id="RHEA:22308"/>
        <dbReference type="ChEBI" id="CHEBI:15379"/>
        <dbReference type="ChEBI" id="CHEBI:16240"/>
        <dbReference type="ChEBI" id="CHEBI:17151"/>
        <dbReference type="ChEBI" id="CHEBI:53455"/>
        <dbReference type="EC" id="1.1.3.41"/>
    </reaction>
</comment>
<comment type="catalytic activity">
    <reaction evidence="7">
        <text>D-sorbitol + O2 = D-glucose + H2O2</text>
        <dbReference type="Rhea" id="RHEA:69524"/>
        <dbReference type="ChEBI" id="CHEBI:4167"/>
        <dbReference type="ChEBI" id="CHEBI:15379"/>
        <dbReference type="ChEBI" id="CHEBI:16240"/>
        <dbReference type="ChEBI" id="CHEBI:17924"/>
    </reaction>
</comment>
<comment type="cofactor">
    <cofactor evidence="2 3">
        <name>FAD</name>
        <dbReference type="ChEBI" id="CHEBI:57692"/>
    </cofactor>
    <text evidence="2 3">Binds 1 FAD covalently per subunit.</text>
</comment>
<comment type="biophysicochemical properties">
    <kinetics>
        <KM evidence="2">0.32 mM for xylitol</KM>
        <KM evidence="2">1.4 mM for D-sorbitol</KM>
        <KM evidence="2">36 mM for D-mannitol</KM>
        <KM evidence="2">25 mM for L-threitol</KM>
        <text evidence="2">kcat is 13 sec(-1) with xylitol as substrate. kcat is 17 sec(-1) with D-sorbitol as substrate. kcat is 9.2 sec(-1) with D-mannitol as substrate. kcat is 6.3 sec(-1) with L-threitol as substrate.</text>
    </kinetics>
</comment>
<comment type="subunit">
    <text evidence="2">Monomer.</text>
</comment>
<comment type="similarity">
    <text evidence="6">Belongs to the oxygen-dependent FAD-linked oxidoreductase family.</text>
</comment>
<dbReference type="EC" id="1.1.3.41" evidence="2"/>
<dbReference type="EMBL" id="AL939126">
    <property type="protein sequence ID" value="CAA22381.1"/>
    <property type="molecule type" value="Genomic_DNA"/>
</dbReference>
<dbReference type="PIR" id="T34660">
    <property type="entry name" value="T34660"/>
</dbReference>
<dbReference type="RefSeq" id="NP_630252.1">
    <property type="nucleotide sequence ID" value="NC_003888.3"/>
</dbReference>
<dbReference type="RefSeq" id="WP_011030685.1">
    <property type="nucleotide sequence ID" value="NZ_VNID01000009.1"/>
</dbReference>
<dbReference type="PDB" id="2VFR">
    <property type="method" value="X-ray"/>
    <property type="resolution" value="1.10 A"/>
    <property type="chains" value="A=1-418"/>
</dbReference>
<dbReference type="PDB" id="2VFS">
    <property type="method" value="X-ray"/>
    <property type="resolution" value="1.60 A"/>
    <property type="chains" value="A=1-418"/>
</dbReference>
<dbReference type="PDB" id="2VFT">
    <property type="method" value="X-ray"/>
    <property type="resolution" value="1.60 A"/>
    <property type="chains" value="A=1-418"/>
</dbReference>
<dbReference type="PDB" id="2VFU">
    <property type="method" value="X-ray"/>
    <property type="resolution" value="1.90 A"/>
    <property type="chains" value="A=1-418"/>
</dbReference>
<dbReference type="PDB" id="2VFV">
    <property type="method" value="X-ray"/>
    <property type="resolution" value="1.72 A"/>
    <property type="chains" value="A=1-418"/>
</dbReference>
<dbReference type="PDBsum" id="2VFR"/>
<dbReference type="PDBsum" id="2VFS"/>
<dbReference type="PDBsum" id="2VFT"/>
<dbReference type="PDBsum" id="2VFU"/>
<dbReference type="PDBsum" id="2VFV"/>
<dbReference type="SMR" id="Q9ZBU1"/>
<dbReference type="STRING" id="100226.gene:17763806"/>
<dbReference type="PaxDb" id="100226-SCO6147"/>
<dbReference type="KEGG" id="sco:SCO6147"/>
<dbReference type="PATRIC" id="fig|100226.15.peg.6251"/>
<dbReference type="eggNOG" id="COG0277">
    <property type="taxonomic scope" value="Bacteria"/>
</dbReference>
<dbReference type="HOGENOM" id="CLU_003896_4_2_11"/>
<dbReference type="InParanoid" id="Q9ZBU1"/>
<dbReference type="OrthoDB" id="9800184at2"/>
<dbReference type="PhylomeDB" id="Q9ZBU1"/>
<dbReference type="BRENDA" id="1.1.3.41">
    <property type="organism ID" value="5998"/>
</dbReference>
<dbReference type="EvolutionaryTrace" id="Q9ZBU1"/>
<dbReference type="Proteomes" id="UP000001973">
    <property type="component" value="Chromosome"/>
</dbReference>
<dbReference type="GO" id="GO:0016020">
    <property type="term" value="C:membrane"/>
    <property type="evidence" value="ECO:0007669"/>
    <property type="project" value="InterPro"/>
</dbReference>
<dbReference type="GO" id="GO:0003885">
    <property type="term" value="F:D-arabinono-1,4-lactone oxidase activity"/>
    <property type="evidence" value="ECO:0007669"/>
    <property type="project" value="InterPro"/>
</dbReference>
<dbReference type="GO" id="GO:0071949">
    <property type="term" value="F:FAD binding"/>
    <property type="evidence" value="ECO:0007669"/>
    <property type="project" value="InterPro"/>
</dbReference>
<dbReference type="GO" id="GO:0080049">
    <property type="term" value="F:L-gulono-1,4-lactone dehydrogenase activity"/>
    <property type="evidence" value="ECO:0000318"/>
    <property type="project" value="GO_Central"/>
</dbReference>
<dbReference type="GO" id="GO:0050582">
    <property type="term" value="F:xylitol oxidase activity"/>
    <property type="evidence" value="ECO:0007669"/>
    <property type="project" value="UniProtKB-EC"/>
</dbReference>
<dbReference type="Gene3D" id="3.30.465.10">
    <property type="match status" value="1"/>
</dbReference>
<dbReference type="Gene3D" id="3.30.70.2520">
    <property type="match status" value="1"/>
</dbReference>
<dbReference type="Gene3D" id="3.30.70.2530">
    <property type="match status" value="1"/>
</dbReference>
<dbReference type="Gene3D" id="3.30.43.10">
    <property type="entry name" value="Uridine Diphospho-n-acetylenolpyruvylglucosamine Reductase, domain 2"/>
    <property type="match status" value="1"/>
</dbReference>
<dbReference type="Gene3D" id="1.10.45.10">
    <property type="entry name" value="Vanillyl-alcohol Oxidase, Chain A, domain 4"/>
    <property type="match status" value="1"/>
</dbReference>
<dbReference type="InterPro" id="IPR007173">
    <property type="entry name" value="ALO_C"/>
</dbReference>
<dbReference type="InterPro" id="IPR016166">
    <property type="entry name" value="FAD-bd_PCMH"/>
</dbReference>
<dbReference type="InterPro" id="IPR036318">
    <property type="entry name" value="FAD-bd_PCMH-like_sf"/>
</dbReference>
<dbReference type="InterPro" id="IPR016167">
    <property type="entry name" value="FAD-bd_PCMH_sub1"/>
</dbReference>
<dbReference type="InterPro" id="IPR016169">
    <property type="entry name" value="FAD-bd_PCMH_sub2"/>
</dbReference>
<dbReference type="InterPro" id="IPR010031">
    <property type="entry name" value="FAD_lactone_oxidase-like"/>
</dbReference>
<dbReference type="InterPro" id="IPR006094">
    <property type="entry name" value="Oxid_FAD_bind_N"/>
</dbReference>
<dbReference type="InterPro" id="IPR016171">
    <property type="entry name" value="Vanillyl_alc_oxidase_C-sub2"/>
</dbReference>
<dbReference type="PANTHER" id="PTHR43762:SF1">
    <property type="entry name" value="D-ARABINONO-1,4-LACTONE OXIDASE"/>
    <property type="match status" value="1"/>
</dbReference>
<dbReference type="PANTHER" id="PTHR43762">
    <property type="entry name" value="L-GULONOLACTONE OXIDASE"/>
    <property type="match status" value="1"/>
</dbReference>
<dbReference type="Pfam" id="PF04030">
    <property type="entry name" value="ALO"/>
    <property type="match status" value="1"/>
</dbReference>
<dbReference type="Pfam" id="PF01565">
    <property type="entry name" value="FAD_binding_4"/>
    <property type="match status" value="1"/>
</dbReference>
<dbReference type="PIRSF" id="PIRSF000136">
    <property type="entry name" value="LGO_GLO"/>
    <property type="match status" value="1"/>
</dbReference>
<dbReference type="SUPFAM" id="SSF56176">
    <property type="entry name" value="FAD-binding/transporter-associated domain-like"/>
    <property type="match status" value="1"/>
</dbReference>
<dbReference type="PROSITE" id="PS51387">
    <property type="entry name" value="FAD_PCMH"/>
    <property type="match status" value="1"/>
</dbReference>
<feature type="chain" id="PRO_0000128174" description="Alditol oxidase">
    <location>
        <begin position="1"/>
        <end position="418"/>
    </location>
</feature>
<feature type="domain" description="FAD-binding PCMH-type" evidence="1">
    <location>
        <begin position="13"/>
        <end position="179"/>
    </location>
</feature>
<feature type="binding site" evidence="8 9 10 11">
    <location>
        <begin position="41"/>
        <end position="47"/>
    </location>
    <ligand>
        <name>FAD</name>
        <dbReference type="ChEBI" id="CHEBI:57692"/>
    </ligand>
</feature>
<feature type="binding site" evidence="10">
    <location>
        <position position="106"/>
    </location>
    <ligand>
        <name>D-sorbitol</name>
        <dbReference type="ChEBI" id="CHEBI:17924"/>
    </ligand>
</feature>
<feature type="binding site" evidence="8 9 10 11">
    <location>
        <position position="106"/>
    </location>
    <ligand>
        <name>FAD</name>
        <dbReference type="ChEBI" id="CHEBI:57692"/>
    </ligand>
</feature>
<feature type="binding site" evidence="9">
    <location>
        <position position="106"/>
    </location>
    <ligand>
        <name>xylitol</name>
        <dbReference type="ChEBI" id="CHEBI:17151"/>
    </ligand>
</feature>
<feature type="binding site" evidence="8 9 10 11">
    <location>
        <position position="111"/>
    </location>
    <ligand>
        <name>FAD</name>
        <dbReference type="ChEBI" id="CHEBI:57692"/>
    </ligand>
</feature>
<feature type="binding site" evidence="8 9 10 11">
    <location>
        <position position="114"/>
    </location>
    <ligand>
        <name>FAD</name>
        <dbReference type="ChEBI" id="CHEBI:57692"/>
    </ligand>
</feature>
<feature type="binding site" evidence="8 9 10 11">
    <location>
        <begin position="118"/>
        <end position="121"/>
    </location>
    <ligand>
        <name>FAD</name>
        <dbReference type="ChEBI" id="CHEBI:57692"/>
    </ligand>
</feature>
<feature type="binding site" evidence="8 9 10 11">
    <location>
        <position position="169"/>
    </location>
    <ligand>
        <name>FAD</name>
        <dbReference type="ChEBI" id="CHEBI:57692"/>
    </ligand>
</feature>
<feature type="binding site" evidence="10">
    <location>
        <position position="320"/>
    </location>
    <ligand>
        <name>D-sorbitol</name>
        <dbReference type="ChEBI" id="CHEBI:17924"/>
    </ligand>
</feature>
<feature type="binding site" evidence="9">
    <location>
        <position position="320"/>
    </location>
    <ligand>
        <name>xylitol</name>
        <dbReference type="ChEBI" id="CHEBI:17151"/>
    </ligand>
</feature>
<feature type="binding site" evidence="10">
    <location>
        <position position="322"/>
    </location>
    <ligand>
        <name>D-sorbitol</name>
        <dbReference type="ChEBI" id="CHEBI:17924"/>
    </ligand>
</feature>
<feature type="binding site" evidence="8 9 10 11">
    <location>
        <position position="322"/>
    </location>
    <ligand>
        <name>FAD</name>
        <dbReference type="ChEBI" id="CHEBI:57692"/>
    </ligand>
</feature>
<feature type="binding site" evidence="9">
    <location>
        <position position="322"/>
    </location>
    <ligand>
        <name>xylitol</name>
        <dbReference type="ChEBI" id="CHEBI:17151"/>
    </ligand>
</feature>
<feature type="binding site" evidence="10">
    <location>
        <position position="345"/>
    </location>
    <ligand>
        <name>D-sorbitol</name>
        <dbReference type="ChEBI" id="CHEBI:17924"/>
    </ligand>
</feature>
<feature type="binding site" evidence="9">
    <location>
        <position position="345"/>
    </location>
    <ligand>
        <name>xylitol</name>
        <dbReference type="ChEBI" id="CHEBI:17151"/>
    </ligand>
</feature>
<feature type="binding site" evidence="8 9 10 11">
    <location>
        <position position="372"/>
    </location>
    <ligand>
        <name>FAD</name>
        <dbReference type="ChEBI" id="CHEBI:57692"/>
    </ligand>
</feature>
<feature type="binding site" evidence="10">
    <location>
        <position position="375"/>
    </location>
    <ligand>
        <name>D-sorbitol</name>
        <dbReference type="ChEBI" id="CHEBI:17924"/>
    </ligand>
</feature>
<feature type="binding site" evidence="9">
    <location>
        <position position="375"/>
    </location>
    <ligand>
        <name>xylitol</name>
        <dbReference type="ChEBI" id="CHEBI:17151"/>
    </ligand>
</feature>
<feature type="modified residue" description="Pros-8alpha-FAD histidine" evidence="3 7 8">
    <location>
        <position position="46"/>
    </location>
</feature>
<feature type="mutagenesis site" description="Does not contain FAD, and shows no oxidase activity." evidence="2">
    <original>H</original>
    <variation>A</variation>
    <location>
        <position position="46"/>
    </location>
</feature>
<feature type="strand" evidence="13">
    <location>
        <begin position="9"/>
        <end position="12"/>
    </location>
</feature>
<feature type="helix" evidence="13">
    <location>
        <begin position="26"/>
        <end position="35"/>
    </location>
</feature>
<feature type="strand" evidence="13">
    <location>
        <begin position="37"/>
        <end position="41"/>
    </location>
</feature>
<feature type="helix" evidence="14">
    <location>
        <begin position="50"/>
        <end position="52"/>
    </location>
</feature>
<feature type="strand" evidence="13">
    <location>
        <begin position="59"/>
        <end position="61"/>
    </location>
</feature>
<feature type="strand" evidence="13">
    <location>
        <begin position="70"/>
        <end position="73"/>
    </location>
</feature>
<feature type="turn" evidence="13">
    <location>
        <begin position="74"/>
        <end position="77"/>
    </location>
</feature>
<feature type="strand" evidence="13">
    <location>
        <begin position="78"/>
        <end position="82"/>
    </location>
</feature>
<feature type="helix" evidence="13">
    <location>
        <begin position="87"/>
        <end position="96"/>
    </location>
</feature>
<feature type="strand" evidence="13">
    <location>
        <begin position="106"/>
        <end position="108"/>
    </location>
</feature>
<feature type="helix" evidence="13">
    <location>
        <begin position="112"/>
        <end position="117"/>
    </location>
</feature>
<feature type="helix" evidence="13">
    <location>
        <begin position="130"/>
        <end position="133"/>
    </location>
</feature>
<feature type="strand" evidence="13">
    <location>
        <begin position="134"/>
        <end position="140"/>
    </location>
</feature>
<feature type="strand" evidence="13">
    <location>
        <begin position="146"/>
        <end position="150"/>
    </location>
</feature>
<feature type="helix" evidence="13">
    <location>
        <begin position="156"/>
        <end position="158"/>
    </location>
</feature>
<feature type="strand" evidence="15">
    <location>
        <begin position="160"/>
        <end position="162"/>
    </location>
</feature>
<feature type="turn" evidence="13">
    <location>
        <begin position="163"/>
        <end position="166"/>
    </location>
</feature>
<feature type="strand" evidence="13">
    <location>
        <begin position="168"/>
        <end position="175"/>
    </location>
</feature>
<feature type="strand" evidence="13">
    <location>
        <begin position="181"/>
        <end position="190"/>
    </location>
</feature>
<feature type="helix" evidence="13">
    <location>
        <begin position="197"/>
        <end position="204"/>
    </location>
</feature>
<feature type="strand" evidence="13">
    <location>
        <begin position="206"/>
        <end position="214"/>
    </location>
</feature>
<feature type="strand" evidence="13">
    <location>
        <begin position="216"/>
        <end position="229"/>
    </location>
</feature>
<feature type="strand" evidence="13">
    <location>
        <begin position="240"/>
        <end position="242"/>
    </location>
</feature>
<feature type="helix" evidence="13">
    <location>
        <begin position="255"/>
        <end position="257"/>
    </location>
</feature>
<feature type="helix" evidence="13">
    <location>
        <begin position="268"/>
        <end position="270"/>
    </location>
</feature>
<feature type="strand" evidence="13">
    <location>
        <begin position="272"/>
        <end position="275"/>
    </location>
</feature>
<feature type="strand" evidence="13">
    <location>
        <begin position="287"/>
        <end position="294"/>
    </location>
</feature>
<feature type="helix" evidence="13">
    <location>
        <begin position="295"/>
        <end position="297"/>
    </location>
</feature>
<feature type="helix" evidence="13">
    <location>
        <begin position="298"/>
        <end position="307"/>
    </location>
</feature>
<feature type="helix" evidence="13">
    <location>
        <begin position="309"/>
        <end position="312"/>
    </location>
</feature>
<feature type="helix" evidence="13">
    <location>
        <begin position="313"/>
        <end position="315"/>
    </location>
</feature>
<feature type="strand" evidence="13">
    <location>
        <begin position="316"/>
        <end position="324"/>
    </location>
</feature>
<feature type="strand" evidence="13">
    <location>
        <begin position="339"/>
        <end position="346"/>
    </location>
</feature>
<feature type="helix" evidence="13">
    <location>
        <begin position="350"/>
        <end position="364"/>
    </location>
</feature>
<feature type="helix" evidence="13">
    <location>
        <begin position="365"/>
        <end position="367"/>
    </location>
</feature>
<feature type="helix" evidence="13">
    <location>
        <begin position="381"/>
        <end position="385"/>
    </location>
</feature>
<feature type="helix" evidence="13">
    <location>
        <begin position="391"/>
        <end position="401"/>
    </location>
</feature>
<feature type="helix" evidence="13">
    <location>
        <begin position="410"/>
        <end position="416"/>
    </location>
</feature>
<sequence>MSDITVTNWAGNITYTAKELLRPHSLDALRALVADSARVRVLGSGHSFNEIAEPGDGGVLLSLAGLPSVVDVDTAARTVRVGGGVRYAELARVVHARGLALPNMASLPHISVAGSVATGTHGSGVGNGSLASVVREVELVTADGSTVVIARGDERFGGAVTSLGALGVVTSLTLDLEPAYEMEQHVFTELPLAGLDPATFETVMAAAYSVSLFTDWRAPGFRQVWLKRRTDRPLDGFPYAAPAAEKMHPVPGMPAVNCTEQFGVPGPWHERLPHFRAEFTPSSGAELQSEYLMPREHALAALHAMDAIRETLAPVLQTCEIRTVAADAQWLSPAYGRDTVAAHFTWVEDTAAVLPVVRRLEEALVPFAARPHWGKVFTVPAGELRALYPRLADFGALAGALDPAGKFTNAFVRGVLAG</sequence>
<proteinExistence type="evidence at protein level"/>
<evidence type="ECO:0000255" key="1">
    <source>
        <dbReference type="PROSITE-ProRule" id="PRU00718"/>
    </source>
</evidence>
<evidence type="ECO:0000269" key="2">
    <source>
    </source>
</evidence>
<evidence type="ECO:0000269" key="3">
    <source>
    </source>
</evidence>
<evidence type="ECO:0000303" key="4">
    <source>
    </source>
</evidence>
<evidence type="ECO:0000303" key="5">
    <source>
    </source>
</evidence>
<evidence type="ECO:0000305" key="6"/>
<evidence type="ECO:0000305" key="7">
    <source>
    </source>
</evidence>
<evidence type="ECO:0007744" key="8">
    <source>
        <dbReference type="PDB" id="2VFR"/>
    </source>
</evidence>
<evidence type="ECO:0007744" key="9">
    <source>
        <dbReference type="PDB" id="2VFS"/>
    </source>
</evidence>
<evidence type="ECO:0007744" key="10">
    <source>
        <dbReference type="PDB" id="2VFT"/>
    </source>
</evidence>
<evidence type="ECO:0007744" key="11">
    <source>
        <dbReference type="PDB" id="2VFU"/>
    </source>
</evidence>
<evidence type="ECO:0007744" key="12">
    <source>
        <dbReference type="PDB" id="2VFV"/>
    </source>
</evidence>
<evidence type="ECO:0007829" key="13">
    <source>
        <dbReference type="PDB" id="2VFR"/>
    </source>
</evidence>
<evidence type="ECO:0007829" key="14">
    <source>
        <dbReference type="PDB" id="2VFS"/>
    </source>
</evidence>
<evidence type="ECO:0007829" key="15">
    <source>
        <dbReference type="PDB" id="2VFV"/>
    </source>
</evidence>